<protein>
    <recommendedName>
        <fullName evidence="14">mRNA decay activator protein ZFP36L2</fullName>
    </recommendedName>
    <alternativeName>
        <fullName evidence="12">Butyrate response factor 2</fullName>
    </alternativeName>
    <alternativeName>
        <fullName evidence="13">EGF-response factor 2</fullName>
        <shortName evidence="13">ERF-2</shortName>
    </alternativeName>
    <alternativeName>
        <fullName evidence="13">TPA-induced sequence 11d</fullName>
    </alternativeName>
    <alternativeName>
        <fullName evidence="15">Zinc finger protein 36, C3H1 type-like 2</fullName>
        <shortName evidence="15">ZFP36-like 2</shortName>
    </alternativeName>
</protein>
<sequence>MSTTLLSAFYDVDFLCKTEKSLANLNLNNMLDKKAVGTPVAAAPSSGFAPGFLRRHSASNLHALAHPAPSPGSCSPKFPGAANGSSCGSAAAGGPTSYGTLKEPSGGGGTALLNKENKFRDRSFSENGDRSQHLLHLQQQQKGGGGSQINSTRYKTELCRPFEESGTCKYGEKCQFAHGFHELRSLTRHPKYKTELCRTFHTIGFCPYGPRCHFIHNADERRPAPSGGASGDLRAFGTRDALHLGFPREPRPKLHHSLSFSGFPSGHHQPPGGLESPLLLDSPTSRTPPPPSCSSASSCSSSASSCSSASAASTPSGAPTCCASAAAAAAAALLYGTGGAEDLLAPGAPCAACSSASCANNAFAFGPELSSLITPLAIQTHNFAAVAAAAYYRSQQQQQQQGLAPPAQPPAPPSATLPAGAAAPPSPPFSFQLPRRLSDSPVFDAPPSPPDSLSDRDSYLSGSLSSGSLSGSESPSLDPGRRLPIFSRLSISDD</sequence>
<feature type="chain" id="PRO_0000089170" description="mRNA decay activator protein ZFP36L2">
    <location>
        <begin position="1"/>
        <end position="494"/>
    </location>
</feature>
<feature type="zinc finger region" description="C3H1-type 1" evidence="2">
    <location>
        <begin position="153"/>
        <end position="181"/>
    </location>
</feature>
<feature type="zinc finger region" description="C3H1-type 2" evidence="2">
    <location>
        <begin position="191"/>
        <end position="219"/>
    </location>
</feature>
<feature type="region of interest" description="Disordered" evidence="3">
    <location>
        <begin position="93"/>
        <end position="113"/>
    </location>
</feature>
<feature type="region of interest" description="RNA-binding" evidence="5 7">
    <location>
        <begin position="170"/>
        <end position="211"/>
    </location>
</feature>
<feature type="region of interest" description="Disordered" evidence="3">
    <location>
        <begin position="257"/>
        <end position="293"/>
    </location>
</feature>
<feature type="region of interest" description="Disordered" evidence="3">
    <location>
        <begin position="397"/>
        <end position="494"/>
    </location>
</feature>
<feature type="short sequence motif" description="RNA-binding" evidence="5 7">
    <location>
        <begin position="153"/>
        <end position="158"/>
    </location>
</feature>
<feature type="compositionally biased region" description="Pro residues" evidence="3">
    <location>
        <begin position="406"/>
        <end position="415"/>
    </location>
</feature>
<feature type="compositionally biased region" description="Low complexity" evidence="3">
    <location>
        <begin position="416"/>
        <end position="435"/>
    </location>
</feature>
<feature type="compositionally biased region" description="Low complexity" evidence="3">
    <location>
        <begin position="459"/>
        <end position="478"/>
    </location>
</feature>
<feature type="modified residue" description="Phosphoserine" evidence="16">
    <location>
        <position position="57"/>
    </location>
</feature>
<feature type="modified residue" description="Phosphoserine" evidence="17">
    <location>
        <position position="125"/>
    </location>
</feature>
<feature type="modified residue" description="Phosphothreonine" evidence="18">
    <location>
        <position position="238"/>
    </location>
</feature>
<feature type="modified residue" description="Phosphoserine; by RPS6KA1" evidence="9">
    <location>
        <position position="490"/>
    </location>
</feature>
<feature type="modified residue" description="Phosphoserine; by RPS6KA1" evidence="9">
    <location>
        <position position="492"/>
    </location>
</feature>
<feature type="sequence variant" id="VAR_087928" description="In OZEMA13; results in decreased mRNA catabolic process." evidence="11">
    <location>
        <begin position="308"/>
        <end position="310"/>
    </location>
</feature>
<feature type="sequence variant" id="VAR_087929" description="In OZEMA13; uncertain significance; dbSNP:rs373995498." evidence="11">
    <original>S</original>
    <variation>A</variation>
    <location>
        <position position="308"/>
    </location>
</feature>
<feature type="mutagenesis site" description="Impaired mRNA-binding; when associated with K-195." evidence="7">
    <original>E</original>
    <variation>R</variation>
    <location>
        <position position="157"/>
    </location>
</feature>
<feature type="mutagenesis site" description="Impaired mRNA-binding; when associated with R-157." evidence="7">
    <original>E</original>
    <variation>K</variation>
    <location>
        <position position="195"/>
    </location>
</feature>
<feature type="sequence conflict" description="In Ref. 1; AAA91778." evidence="14" ref="1">
    <original>TS</original>
    <variation>DL</variation>
    <location>
        <begin position="96"/>
        <end position="97"/>
    </location>
</feature>
<feature type="sequence conflict" description="In Ref. 2; CAA55592." evidence="14" ref="2">
    <original>A</original>
    <variation>T</variation>
    <location>
        <position position="318"/>
    </location>
</feature>
<feature type="sequence conflict" description="In Ref. 2; CAA55592." evidence="14" ref="2">
    <original>AAAA</original>
    <variation>LR</variation>
    <location>
        <begin position="329"/>
        <end position="332"/>
    </location>
</feature>
<feature type="sequence conflict" description="In Ref. 1; AAA91778." evidence="14" ref="1">
    <location>
        <begin position="331"/>
        <end position="332"/>
    </location>
</feature>
<feature type="sequence conflict" description="In Ref. 5; AAH05010." evidence="14" ref="5">
    <original>Q</original>
    <variation>QQQQ</variation>
    <location>
        <position position="400"/>
    </location>
</feature>
<feature type="sequence conflict" description="In Ref. 1; AAA91778." evidence="14" ref="1">
    <location>
        <begin position="453"/>
        <end position="462"/>
    </location>
</feature>
<feature type="turn" evidence="19">
    <location>
        <begin position="152"/>
        <end position="155"/>
    </location>
</feature>
<feature type="strand" evidence="19">
    <location>
        <begin position="156"/>
        <end position="158"/>
    </location>
</feature>
<feature type="helix" evidence="19">
    <location>
        <begin position="160"/>
        <end position="165"/>
    </location>
</feature>
<feature type="helix" evidence="19">
    <location>
        <begin position="171"/>
        <end position="173"/>
    </location>
</feature>
<feature type="strand" evidence="19">
    <location>
        <begin position="175"/>
        <end position="179"/>
    </location>
</feature>
<feature type="helix" evidence="19">
    <location>
        <begin position="180"/>
        <end position="182"/>
    </location>
</feature>
<feature type="turn" evidence="19">
    <location>
        <begin position="190"/>
        <end position="193"/>
    </location>
</feature>
<feature type="helix" evidence="19">
    <location>
        <begin position="198"/>
        <end position="203"/>
    </location>
</feature>
<feature type="helix" evidence="19">
    <location>
        <begin position="209"/>
        <end position="211"/>
    </location>
</feature>
<feature type="strand" evidence="19">
    <location>
        <begin position="213"/>
        <end position="215"/>
    </location>
</feature>
<dbReference type="EMBL" id="U07802">
    <property type="protein sequence ID" value="AAA91778.1"/>
    <property type="molecule type" value="Genomic_DNA"/>
</dbReference>
<dbReference type="EMBL" id="X78992">
    <property type="protein sequence ID" value="CAA55592.1"/>
    <property type="molecule type" value="mRNA"/>
</dbReference>
<dbReference type="EMBL" id="AC010883">
    <property type="protein sequence ID" value="AAY14992.1"/>
    <property type="molecule type" value="Genomic_DNA"/>
</dbReference>
<dbReference type="EMBL" id="CH471053">
    <property type="protein sequence ID" value="EAX00306.1"/>
    <property type="molecule type" value="Genomic_DNA"/>
</dbReference>
<dbReference type="EMBL" id="BC005010">
    <property type="protein sequence ID" value="AAH05010.1"/>
    <property type="molecule type" value="mRNA"/>
</dbReference>
<dbReference type="CCDS" id="CCDS1811.1"/>
<dbReference type="PIR" id="S49147">
    <property type="entry name" value="S49147"/>
</dbReference>
<dbReference type="RefSeq" id="NP_008818.3">
    <property type="nucleotide sequence ID" value="NM_006887.4"/>
</dbReference>
<dbReference type="PDB" id="1RGO">
    <property type="method" value="NMR"/>
    <property type="chains" value="A=151-220"/>
</dbReference>
<dbReference type="PDBsum" id="1RGO"/>
<dbReference type="SMR" id="P47974"/>
<dbReference type="BioGRID" id="107145">
    <property type="interactions" value="219"/>
</dbReference>
<dbReference type="CORUM" id="P47974"/>
<dbReference type="FunCoup" id="P47974">
    <property type="interactions" value="2158"/>
</dbReference>
<dbReference type="IntAct" id="P47974">
    <property type="interactions" value="18"/>
</dbReference>
<dbReference type="STRING" id="9606.ENSP00000282388"/>
<dbReference type="GlyGen" id="P47974">
    <property type="glycosylation" value="2 sites, 1 O-linked glycan (1 site)"/>
</dbReference>
<dbReference type="iPTMnet" id="P47974"/>
<dbReference type="PhosphoSitePlus" id="P47974"/>
<dbReference type="BioMuta" id="ZFP36L2"/>
<dbReference type="DMDM" id="146291085"/>
<dbReference type="jPOST" id="P47974"/>
<dbReference type="MassIVE" id="P47974"/>
<dbReference type="PaxDb" id="9606-ENSP00000282388"/>
<dbReference type="PeptideAtlas" id="P47974"/>
<dbReference type="ProteomicsDB" id="55827"/>
<dbReference type="Pumba" id="P47974"/>
<dbReference type="Antibodypedia" id="14846">
    <property type="antibodies" value="245 antibodies from 31 providers"/>
</dbReference>
<dbReference type="DNASU" id="678"/>
<dbReference type="Ensembl" id="ENST00000282388.4">
    <property type="protein sequence ID" value="ENSP00000282388.3"/>
    <property type="gene ID" value="ENSG00000152518.8"/>
</dbReference>
<dbReference type="GeneID" id="678"/>
<dbReference type="KEGG" id="hsa:678"/>
<dbReference type="MANE-Select" id="ENST00000282388.4">
    <property type="protein sequence ID" value="ENSP00000282388.3"/>
    <property type="RefSeq nucleotide sequence ID" value="NM_006887.5"/>
    <property type="RefSeq protein sequence ID" value="NP_008818.3"/>
</dbReference>
<dbReference type="UCSC" id="uc002rsv.5">
    <property type="organism name" value="human"/>
</dbReference>
<dbReference type="AGR" id="HGNC:1108"/>
<dbReference type="CTD" id="678"/>
<dbReference type="DisGeNET" id="678"/>
<dbReference type="GeneCards" id="ZFP36L2"/>
<dbReference type="HGNC" id="HGNC:1108">
    <property type="gene designation" value="ZFP36L2"/>
</dbReference>
<dbReference type="HPA" id="ENSG00000152518">
    <property type="expression patterns" value="Low tissue specificity"/>
</dbReference>
<dbReference type="MalaCards" id="ZFP36L2"/>
<dbReference type="MIM" id="612053">
    <property type="type" value="gene"/>
</dbReference>
<dbReference type="MIM" id="620154">
    <property type="type" value="phenotype"/>
</dbReference>
<dbReference type="neXtProt" id="NX_P47974"/>
<dbReference type="OpenTargets" id="ENSG00000152518"/>
<dbReference type="Orphanet" id="675396">
    <property type="disease" value="Epithelioid hemangioma"/>
</dbReference>
<dbReference type="Orphanet" id="400025">
    <property type="disease" value="Female infertility due to an implantation defect of genetic origin"/>
</dbReference>
<dbReference type="PharmGKB" id="PA35028"/>
<dbReference type="VEuPathDB" id="HostDB:ENSG00000152518"/>
<dbReference type="eggNOG" id="KOG1677">
    <property type="taxonomic scope" value="Eukaryota"/>
</dbReference>
<dbReference type="GeneTree" id="ENSGT00940000161584"/>
<dbReference type="HOGENOM" id="CLU_033040_1_0_1"/>
<dbReference type="InParanoid" id="P47974"/>
<dbReference type="OMA" id="AFYDMDM"/>
<dbReference type="OrthoDB" id="410307at2759"/>
<dbReference type="PAN-GO" id="P47974">
    <property type="GO annotations" value="0 GO annotations based on evolutionary models"/>
</dbReference>
<dbReference type="PhylomeDB" id="P47974"/>
<dbReference type="TreeFam" id="TF315463"/>
<dbReference type="PathwayCommons" id="P47974"/>
<dbReference type="Reactome" id="R-HSA-9820841">
    <property type="pathway name" value="M-decay: degradation of maternal mRNAs by maternally stored factors"/>
</dbReference>
<dbReference type="SignaLink" id="P47974"/>
<dbReference type="BioGRID-ORCS" id="678">
    <property type="hits" value="72 hits in 1168 CRISPR screens"/>
</dbReference>
<dbReference type="CD-CODE" id="232F8A39">
    <property type="entry name" value="P-body"/>
</dbReference>
<dbReference type="CD-CODE" id="DEE660B4">
    <property type="entry name" value="Stress granule"/>
</dbReference>
<dbReference type="ChiTaRS" id="ZFP36L2">
    <property type="organism name" value="human"/>
</dbReference>
<dbReference type="EvolutionaryTrace" id="P47974"/>
<dbReference type="GenomeRNAi" id="678"/>
<dbReference type="Pharos" id="P47974">
    <property type="development level" value="Tbio"/>
</dbReference>
<dbReference type="PRO" id="PR:P47974"/>
<dbReference type="Proteomes" id="UP000005640">
    <property type="component" value="Chromosome 2"/>
</dbReference>
<dbReference type="RNAct" id="P47974">
    <property type="molecule type" value="protein"/>
</dbReference>
<dbReference type="Bgee" id="ENSG00000152518">
    <property type="expression patterns" value="Expressed in upper leg skin and 213 other cell types or tissues"/>
</dbReference>
<dbReference type="GO" id="GO:0005737">
    <property type="term" value="C:cytoplasm"/>
    <property type="evidence" value="ECO:0000250"/>
    <property type="project" value="UniProtKB"/>
</dbReference>
<dbReference type="GO" id="GO:0005634">
    <property type="term" value="C:nucleus"/>
    <property type="evidence" value="ECO:0000250"/>
    <property type="project" value="UniProtKB"/>
</dbReference>
<dbReference type="GO" id="GO:1990904">
    <property type="term" value="C:ribonucleoprotein complex"/>
    <property type="evidence" value="ECO:0007669"/>
    <property type="project" value="UniProtKB-KW"/>
</dbReference>
<dbReference type="GO" id="GO:0035925">
    <property type="term" value="F:mRNA 3'-UTR AU-rich region binding"/>
    <property type="evidence" value="ECO:0000314"/>
    <property type="project" value="UniProtKB"/>
</dbReference>
<dbReference type="GO" id="GO:0003723">
    <property type="term" value="F:RNA binding"/>
    <property type="evidence" value="ECO:0007005"/>
    <property type="project" value="UniProtKB"/>
</dbReference>
<dbReference type="GO" id="GO:0008270">
    <property type="term" value="F:zinc ion binding"/>
    <property type="evidence" value="ECO:0007669"/>
    <property type="project" value="UniProtKB-KW"/>
</dbReference>
<dbReference type="GO" id="GO:0061158">
    <property type="term" value="P:3'-UTR-mediated mRNA destabilization"/>
    <property type="evidence" value="ECO:0000315"/>
    <property type="project" value="UniProtKB"/>
</dbReference>
<dbReference type="GO" id="GO:0071364">
    <property type="term" value="P:cellular response to epidermal growth factor stimulus"/>
    <property type="evidence" value="ECO:0000314"/>
    <property type="project" value="UniProtKB"/>
</dbReference>
<dbReference type="GO" id="GO:0044344">
    <property type="term" value="P:cellular response to fibroblast growth factor stimulus"/>
    <property type="evidence" value="ECO:0000314"/>
    <property type="project" value="UniProtKB"/>
</dbReference>
<dbReference type="GO" id="GO:0071385">
    <property type="term" value="P:cellular response to glucocorticoid stimulus"/>
    <property type="evidence" value="ECO:0000314"/>
    <property type="project" value="UniProtKB"/>
</dbReference>
<dbReference type="GO" id="GO:0097011">
    <property type="term" value="P:cellular response to granulocyte macrophage colony-stimulating factor stimulus"/>
    <property type="evidence" value="ECO:0000314"/>
    <property type="project" value="UniProtKB"/>
</dbReference>
<dbReference type="GO" id="GO:0071560">
    <property type="term" value="P:cellular response to transforming growth factor beta stimulus"/>
    <property type="evidence" value="ECO:0000314"/>
    <property type="project" value="UniProtKB"/>
</dbReference>
<dbReference type="GO" id="GO:0071356">
    <property type="term" value="P:cellular response to tumor necrosis factor"/>
    <property type="evidence" value="ECO:0000314"/>
    <property type="project" value="UniProtKB"/>
</dbReference>
<dbReference type="GO" id="GO:0060216">
    <property type="term" value="P:definitive hemopoiesis"/>
    <property type="evidence" value="ECO:0000250"/>
    <property type="project" value="UniProtKB"/>
</dbReference>
<dbReference type="GO" id="GO:0070371">
    <property type="term" value="P:ERK1 and ERK2 cascade"/>
    <property type="evidence" value="ECO:0000314"/>
    <property type="project" value="UniProtKB"/>
</dbReference>
<dbReference type="GO" id="GO:0030097">
    <property type="term" value="P:hemopoiesis"/>
    <property type="evidence" value="ECO:0000250"/>
    <property type="project" value="UniProtKB"/>
</dbReference>
<dbReference type="GO" id="GO:0006402">
    <property type="term" value="P:mRNA catabolic process"/>
    <property type="evidence" value="ECO:0000315"/>
    <property type="project" value="UniProtKB"/>
</dbReference>
<dbReference type="GO" id="GO:0045599">
    <property type="term" value="P:negative regulation of fat cell differentiation"/>
    <property type="evidence" value="ECO:0000250"/>
    <property type="project" value="UniProtKB"/>
</dbReference>
<dbReference type="GO" id="GO:1901991">
    <property type="term" value="P:negative regulation of mitotic cell cycle phase transition"/>
    <property type="evidence" value="ECO:0000250"/>
    <property type="project" value="UniProtKB"/>
</dbReference>
<dbReference type="GO" id="GO:2000737">
    <property type="term" value="P:negative regulation of stem cell differentiation"/>
    <property type="evidence" value="ECO:0000250"/>
    <property type="project" value="UniProtKB"/>
</dbReference>
<dbReference type="GO" id="GO:0000288">
    <property type="term" value="P:nuclear-transcribed mRNA catabolic process, deadenylation-dependent decay"/>
    <property type="evidence" value="ECO:0007669"/>
    <property type="project" value="Ensembl"/>
</dbReference>
<dbReference type="GO" id="GO:1900153">
    <property type="term" value="P:positive regulation of nuclear-transcribed mRNA catabolic process, deadenylation-dependent decay"/>
    <property type="evidence" value="ECO:0000250"/>
    <property type="project" value="UniProtKB"/>
</dbReference>
<dbReference type="GO" id="GO:0045577">
    <property type="term" value="P:regulation of B cell differentiation"/>
    <property type="evidence" value="ECO:0000250"/>
    <property type="project" value="UniProtKB"/>
</dbReference>
<dbReference type="GO" id="GO:0043488">
    <property type="term" value="P:regulation of mRNA stability"/>
    <property type="evidence" value="ECO:0000315"/>
    <property type="project" value="UniProtKB"/>
</dbReference>
<dbReference type="GO" id="GO:0009611">
    <property type="term" value="P:response to wounding"/>
    <property type="evidence" value="ECO:0000314"/>
    <property type="project" value="UniProtKB"/>
</dbReference>
<dbReference type="GO" id="GO:0048103">
    <property type="term" value="P:somatic stem cell division"/>
    <property type="evidence" value="ECO:0000250"/>
    <property type="project" value="UniProtKB"/>
</dbReference>
<dbReference type="GO" id="GO:0035019">
    <property type="term" value="P:somatic stem cell population maintenance"/>
    <property type="evidence" value="ECO:0000250"/>
    <property type="project" value="UniProtKB"/>
</dbReference>
<dbReference type="GO" id="GO:0033077">
    <property type="term" value="P:T cell differentiation in thymus"/>
    <property type="evidence" value="ECO:0000250"/>
    <property type="project" value="UniProtKB"/>
</dbReference>
<dbReference type="FunFam" id="4.10.1000.10:FF:000001">
    <property type="entry name" value="zinc finger CCCH domain-containing protein 15-like"/>
    <property type="match status" value="1"/>
</dbReference>
<dbReference type="FunFam" id="4.10.1000.10:FF:000002">
    <property type="entry name" value="Zinc finger protein 36, C3H1 type-like 1"/>
    <property type="match status" value="1"/>
</dbReference>
<dbReference type="Gene3D" id="4.10.1000.10">
    <property type="entry name" value="Zinc finger, CCCH-type"/>
    <property type="match status" value="2"/>
</dbReference>
<dbReference type="IDEAL" id="IID00150"/>
<dbReference type="InterPro" id="IPR007635">
    <property type="entry name" value="Tis11B_N"/>
</dbReference>
<dbReference type="InterPro" id="IPR045877">
    <property type="entry name" value="ZFP36-like"/>
</dbReference>
<dbReference type="InterPro" id="IPR000571">
    <property type="entry name" value="Znf_CCCH"/>
</dbReference>
<dbReference type="InterPro" id="IPR036855">
    <property type="entry name" value="Znf_CCCH_sf"/>
</dbReference>
<dbReference type="PANTHER" id="PTHR12547">
    <property type="entry name" value="CCCH ZINC FINGER/TIS11-RELATED"/>
    <property type="match status" value="1"/>
</dbReference>
<dbReference type="PANTHER" id="PTHR12547:SF174">
    <property type="entry name" value="MRNA DECAY ACTIVATOR PROTEIN ZFP36L2"/>
    <property type="match status" value="1"/>
</dbReference>
<dbReference type="Pfam" id="PF04553">
    <property type="entry name" value="Tis11B_N"/>
    <property type="match status" value="1"/>
</dbReference>
<dbReference type="Pfam" id="PF00642">
    <property type="entry name" value="zf-CCCH"/>
    <property type="match status" value="2"/>
</dbReference>
<dbReference type="SMART" id="SM00356">
    <property type="entry name" value="ZnF_C3H1"/>
    <property type="match status" value="2"/>
</dbReference>
<dbReference type="SUPFAM" id="SSF90229">
    <property type="entry name" value="CCCH zinc finger"/>
    <property type="match status" value="2"/>
</dbReference>
<dbReference type="PROSITE" id="PS50103">
    <property type="entry name" value="ZF_C3H1"/>
    <property type="match status" value="2"/>
</dbReference>
<reference key="1">
    <citation type="journal article" date="1995" name="Oncogene">
        <title>Identification of a member of the TIS11 early response gene family at the insertion point of a DNA fragment containing a gene for the T-cell receptor beta chain in an acute T-cell leukemia.</title>
        <authorList>
            <person name="Ino T."/>
            <person name="Yasui H."/>
            <person name="Hirano M."/>
            <person name="Kurosawa Y."/>
        </authorList>
    </citation>
    <scope>NUCLEOTIDE SEQUENCE [GENOMIC DNA]</scope>
</reference>
<reference key="2">
    <citation type="journal article" date="1995" name="Gene">
        <title>ERF-2, the human homologue of the murine Tis11d early response gene.</title>
        <authorList>
            <person name="Nie X.F."/>
            <person name="Maclean K.N."/>
            <person name="Kumar V."/>
            <person name="McKay I.A."/>
            <person name="Bustin S.A."/>
        </authorList>
    </citation>
    <scope>NUCLEOTIDE SEQUENCE [MRNA]</scope>
</reference>
<reference key="3">
    <citation type="journal article" date="2005" name="Nature">
        <title>Generation and annotation of the DNA sequences of human chromosomes 2 and 4.</title>
        <authorList>
            <person name="Hillier L.W."/>
            <person name="Graves T.A."/>
            <person name="Fulton R.S."/>
            <person name="Fulton L.A."/>
            <person name="Pepin K.H."/>
            <person name="Minx P."/>
            <person name="Wagner-McPherson C."/>
            <person name="Layman D."/>
            <person name="Wylie K."/>
            <person name="Sekhon M."/>
            <person name="Becker M.C."/>
            <person name="Fewell G.A."/>
            <person name="Delehaunty K.D."/>
            <person name="Miner T.L."/>
            <person name="Nash W.E."/>
            <person name="Kremitzki C."/>
            <person name="Oddy L."/>
            <person name="Du H."/>
            <person name="Sun H."/>
            <person name="Bradshaw-Cordum H."/>
            <person name="Ali J."/>
            <person name="Carter J."/>
            <person name="Cordes M."/>
            <person name="Harris A."/>
            <person name="Isak A."/>
            <person name="van Brunt A."/>
            <person name="Nguyen C."/>
            <person name="Du F."/>
            <person name="Courtney L."/>
            <person name="Kalicki J."/>
            <person name="Ozersky P."/>
            <person name="Abbott S."/>
            <person name="Armstrong J."/>
            <person name="Belter E.A."/>
            <person name="Caruso L."/>
            <person name="Cedroni M."/>
            <person name="Cotton M."/>
            <person name="Davidson T."/>
            <person name="Desai A."/>
            <person name="Elliott G."/>
            <person name="Erb T."/>
            <person name="Fronick C."/>
            <person name="Gaige T."/>
            <person name="Haakenson W."/>
            <person name="Haglund K."/>
            <person name="Holmes A."/>
            <person name="Harkins R."/>
            <person name="Kim K."/>
            <person name="Kruchowski S.S."/>
            <person name="Strong C.M."/>
            <person name="Grewal N."/>
            <person name="Goyea E."/>
            <person name="Hou S."/>
            <person name="Levy A."/>
            <person name="Martinka S."/>
            <person name="Mead K."/>
            <person name="McLellan M.D."/>
            <person name="Meyer R."/>
            <person name="Randall-Maher J."/>
            <person name="Tomlinson C."/>
            <person name="Dauphin-Kohlberg S."/>
            <person name="Kozlowicz-Reilly A."/>
            <person name="Shah N."/>
            <person name="Swearengen-Shahid S."/>
            <person name="Snider J."/>
            <person name="Strong J.T."/>
            <person name="Thompson J."/>
            <person name="Yoakum M."/>
            <person name="Leonard S."/>
            <person name="Pearman C."/>
            <person name="Trani L."/>
            <person name="Radionenko M."/>
            <person name="Waligorski J.E."/>
            <person name="Wang C."/>
            <person name="Rock S.M."/>
            <person name="Tin-Wollam A.-M."/>
            <person name="Maupin R."/>
            <person name="Latreille P."/>
            <person name="Wendl M.C."/>
            <person name="Yang S.-P."/>
            <person name="Pohl C."/>
            <person name="Wallis J.W."/>
            <person name="Spieth J."/>
            <person name="Bieri T.A."/>
            <person name="Berkowicz N."/>
            <person name="Nelson J.O."/>
            <person name="Osborne J."/>
            <person name="Ding L."/>
            <person name="Meyer R."/>
            <person name="Sabo A."/>
            <person name="Shotland Y."/>
            <person name="Sinha P."/>
            <person name="Wohldmann P.E."/>
            <person name="Cook L.L."/>
            <person name="Hickenbotham M.T."/>
            <person name="Eldred J."/>
            <person name="Williams D."/>
            <person name="Jones T.A."/>
            <person name="She X."/>
            <person name="Ciccarelli F.D."/>
            <person name="Izaurralde E."/>
            <person name="Taylor J."/>
            <person name="Schmutz J."/>
            <person name="Myers R.M."/>
            <person name="Cox D.R."/>
            <person name="Huang X."/>
            <person name="McPherson J.D."/>
            <person name="Mardis E.R."/>
            <person name="Clifton S.W."/>
            <person name="Warren W.C."/>
            <person name="Chinwalla A.T."/>
            <person name="Eddy S.R."/>
            <person name="Marra M.A."/>
            <person name="Ovcharenko I."/>
            <person name="Furey T.S."/>
            <person name="Miller W."/>
            <person name="Eichler E.E."/>
            <person name="Bork P."/>
            <person name="Suyama M."/>
            <person name="Torrents D."/>
            <person name="Waterston R.H."/>
            <person name="Wilson R.K."/>
        </authorList>
    </citation>
    <scope>NUCLEOTIDE SEQUENCE [LARGE SCALE GENOMIC DNA]</scope>
</reference>
<reference key="4">
    <citation type="submission" date="2005-07" db="EMBL/GenBank/DDBJ databases">
        <authorList>
            <person name="Mural R.J."/>
            <person name="Istrail S."/>
            <person name="Sutton G.G."/>
            <person name="Florea L."/>
            <person name="Halpern A.L."/>
            <person name="Mobarry C.M."/>
            <person name="Lippert R."/>
            <person name="Walenz B."/>
            <person name="Shatkay H."/>
            <person name="Dew I."/>
            <person name="Miller J.R."/>
            <person name="Flanigan M.J."/>
            <person name="Edwards N.J."/>
            <person name="Bolanos R."/>
            <person name="Fasulo D."/>
            <person name="Halldorsson B.V."/>
            <person name="Hannenhalli S."/>
            <person name="Turner R."/>
            <person name="Yooseph S."/>
            <person name="Lu F."/>
            <person name="Nusskern D.R."/>
            <person name="Shue B.C."/>
            <person name="Zheng X.H."/>
            <person name="Zhong F."/>
            <person name="Delcher A.L."/>
            <person name="Huson D.H."/>
            <person name="Kravitz S.A."/>
            <person name="Mouchard L."/>
            <person name="Reinert K."/>
            <person name="Remington K.A."/>
            <person name="Clark A.G."/>
            <person name="Waterman M.S."/>
            <person name="Eichler E.E."/>
            <person name="Adams M.D."/>
            <person name="Hunkapiller M.W."/>
            <person name="Myers E.W."/>
            <person name="Venter J.C."/>
        </authorList>
    </citation>
    <scope>NUCLEOTIDE SEQUENCE [LARGE SCALE GENOMIC DNA]</scope>
</reference>
<reference key="5">
    <citation type="journal article" date="2004" name="Genome Res.">
        <title>The status, quality, and expansion of the NIH full-length cDNA project: the Mammalian Gene Collection (MGC).</title>
        <authorList>
            <consortium name="The MGC Project Team"/>
        </authorList>
    </citation>
    <scope>NUCLEOTIDE SEQUENCE [LARGE SCALE MRNA]</scope>
    <source>
        <tissue>Pancreas</tissue>
    </source>
</reference>
<reference key="6">
    <citation type="journal article" date="1998" name="Br. J. Biomed. Sci.">
        <title>Differential effects of sodium butyrate on the transcription of the human TIS11 family of early-response genes in colorectal cancer cells.</title>
        <authorList>
            <person name="Maclean K.N."/>
            <person name="McKay I.A."/>
            <person name="Bustin S.A."/>
        </authorList>
    </citation>
    <scope>INDUCTION</scope>
</reference>
<reference key="7">
    <citation type="journal article" date="2008" name="Proc. Natl. Acad. Sci. U.S.A.">
        <title>A quantitative atlas of mitotic phosphorylation.</title>
        <authorList>
            <person name="Dephoure N."/>
            <person name="Zhou C."/>
            <person name="Villen J."/>
            <person name="Beausoleil S.A."/>
            <person name="Bakalarski C.E."/>
            <person name="Elledge S.J."/>
            <person name="Gygi S.P."/>
        </authorList>
    </citation>
    <scope>PHOSPHORYLATION [LARGE SCALE ANALYSIS] AT SER-57</scope>
    <scope>IDENTIFICATION BY MASS SPECTROMETRY [LARGE SCALE ANALYSIS]</scope>
    <source>
        <tissue>Cervix carcinoma</tissue>
    </source>
</reference>
<reference key="8">
    <citation type="journal article" date="2010" name="Growth Factors">
        <title>ZFP36L1 is regulated by growth factors and cytokines in keratinocytes and influences their VEGF production.</title>
        <authorList>
            <person name="Hacker C."/>
            <person name="Valchanova R."/>
            <person name="Adams S."/>
            <person name="Munz B."/>
        </authorList>
    </citation>
    <scope>INDUCTION</scope>
</reference>
<reference key="9">
    <citation type="journal article" date="2010" name="Protein Sci.">
        <title>A computational study of RNA binding and specificity in the tandem zinc finger domain of TIS11d.</title>
        <authorList>
            <person name="Morgan B.R."/>
            <person name="Massi F."/>
        </authorList>
    </citation>
    <scope>RNA-BINDING</scope>
    <scope>MUTAGENESIS OF GLU-157 AND GLU-195</scope>
</reference>
<reference key="10">
    <citation type="journal article" date="2010" name="Sci. Signal.">
        <title>Quantitative phosphoproteomics reveals widespread full phosphorylation site occupancy during mitosis.</title>
        <authorList>
            <person name="Olsen J.V."/>
            <person name="Vermeulen M."/>
            <person name="Santamaria A."/>
            <person name="Kumar C."/>
            <person name="Miller M.L."/>
            <person name="Jensen L.J."/>
            <person name="Gnad F."/>
            <person name="Cox J."/>
            <person name="Jensen T.S."/>
            <person name="Nigg E.A."/>
            <person name="Brunak S."/>
            <person name="Mann M."/>
        </authorList>
    </citation>
    <scope>IDENTIFICATION BY MASS SPECTROMETRY [LARGE SCALE ANALYSIS]</scope>
    <source>
        <tissue>Cervix carcinoma</tissue>
    </source>
</reference>
<reference key="11">
    <citation type="journal article" date="2011" name="Int. J. Oncol.">
        <title>Mutation in the RNA binding protein TIS11D/ZFP36L2 is associated with the pathogenesis of acute leukemia.</title>
        <authorList>
            <person name="Iwanaga E."/>
            <person name="Nanri T."/>
            <person name="Mitsuya H."/>
            <person name="Asou N."/>
        </authorList>
    </citation>
    <scope>POSSIBLE INVOLVEMENT IN LEUKEMIAS</scope>
</reference>
<reference key="12">
    <citation type="journal article" date="2011" name="Sci. Signal.">
        <title>System-wide temporal characterization of the proteome and phosphoproteome of human embryonic stem cell differentiation.</title>
        <authorList>
            <person name="Rigbolt K.T."/>
            <person name="Prokhorova T.A."/>
            <person name="Akimov V."/>
            <person name="Henningsen J."/>
            <person name="Johansen P.T."/>
            <person name="Kratchmarova I."/>
            <person name="Kassem M."/>
            <person name="Mann M."/>
            <person name="Olsen J.V."/>
            <person name="Blagoev B."/>
        </authorList>
    </citation>
    <scope>PHOSPHORYLATION [LARGE SCALE ANALYSIS] AT SER-125</scope>
    <scope>IDENTIFICATION BY MASS SPECTROMETRY [LARGE SCALE ANALYSIS]</scope>
</reference>
<reference key="13">
    <citation type="journal article" date="2013" name="J. Proteome Res.">
        <title>Toward a comprehensive characterization of a human cancer cell phosphoproteome.</title>
        <authorList>
            <person name="Zhou H."/>
            <person name="Di Palma S."/>
            <person name="Preisinger C."/>
            <person name="Peng M."/>
            <person name="Polat A.N."/>
            <person name="Heck A.J."/>
            <person name="Mohammed S."/>
        </authorList>
    </citation>
    <scope>PHOSPHORYLATION [LARGE SCALE ANALYSIS] AT THR-238</scope>
    <scope>IDENTIFICATION BY MASS SPECTROMETRY [LARGE SCALE ANALYSIS]</scope>
    <source>
        <tissue>Cervix carcinoma</tissue>
        <tissue>Erythroleukemia</tissue>
    </source>
</reference>
<reference key="14">
    <citation type="journal article" date="2014" name="J. Proteomics">
        <title>An enzyme assisted RP-RPLC approach for in-depth analysis of human liver phosphoproteome.</title>
        <authorList>
            <person name="Bian Y."/>
            <person name="Song C."/>
            <person name="Cheng K."/>
            <person name="Dong M."/>
            <person name="Wang F."/>
            <person name="Huang J."/>
            <person name="Sun D."/>
            <person name="Wang L."/>
            <person name="Ye M."/>
            <person name="Zou H."/>
        </authorList>
    </citation>
    <scope>IDENTIFICATION BY MASS SPECTROMETRY [LARGE SCALE ANALYSIS]</scope>
    <source>
        <tissue>Liver</tissue>
    </source>
</reference>
<reference key="15">
    <citation type="journal article" date="2014" name="Nucleic Acids Res.">
        <title>ZFP36L1 and ZFP36L2 control LDLR mRNA stability via the ERK-RSK pathway.</title>
        <authorList>
            <person name="Adachi S."/>
            <person name="Homoto M."/>
            <person name="Tanaka R."/>
            <person name="Hioki Y."/>
            <person name="Murakami H."/>
            <person name="Suga H."/>
            <person name="Matsumoto M."/>
            <person name="Nakayama K.I."/>
            <person name="Hatta T."/>
            <person name="Iemura S."/>
            <person name="Natsume T."/>
        </authorList>
    </citation>
    <scope>FUNCTION</scope>
    <scope>RNA-BINDING</scope>
    <scope>INTERACTION WITH CNOT7</scope>
    <scope>PHOSPHORYLATION AT SER-490 AND SER-492</scope>
    <scope>IDENTIFICATION BY MASS SPECTROMETRY</scope>
</reference>
<reference key="16">
    <citation type="journal article" date="2016" name="Eur. J. Cell Biol.">
        <title>Functional analysis of ZFP36 proteins in keratinocytes.</title>
        <authorList>
            <person name="Prenzler F."/>
            <person name="Fragasso A."/>
            <person name="Schmitt A."/>
            <person name="Munz B."/>
        </authorList>
    </citation>
    <scope>TISSUE SPECIFICITY</scope>
    <scope>INDUCTION</scope>
</reference>
<reference key="17">
    <citation type="journal article" date="2022" name="J. Med. Genet.">
        <title>Biallelic variants in ZFP36L2 cause female infertility characterised by recurrent preimplantation embryo arrest.</title>
        <authorList>
            <person name="Zheng W."/>
            <person name="Sha Q.Q."/>
            <person name="Hu H."/>
            <person name="Meng F."/>
            <person name="Zhou Q."/>
            <person name="Chen X."/>
            <person name="Zhang S."/>
            <person name="Gu Y."/>
            <person name="Yan X."/>
            <person name="Zhao L."/>
            <person name="Zong Y."/>
            <person name="Hu L."/>
            <person name="Gong F."/>
            <person name="Lu G."/>
            <person name="Fan H.Y."/>
            <person name="Lin G."/>
        </authorList>
    </citation>
    <scope>INVOLVEMENT IN OZEMA13</scope>
    <scope>VARIANTS OZEMA13 308-SER--SER-310 DEL AND ALA-308</scope>
    <scope>CHARACTERIZATION OF VARIANT OZEMA13 308-SER--SER-310 DEL</scope>
    <scope>FUNCTION</scope>
    <scope>SUBCELLULAR LOCATION</scope>
    <scope>TISSUE SPECIFICITY</scope>
    <scope>INTERACTION WITH CNOT6L</scope>
</reference>
<reference key="18">
    <citation type="journal article" date="2004" name="Nat. Struct. Mol. Biol.">
        <title>Recognition of the mRNA AU-rich element by the zinc finger domain of TIS11d.</title>
        <authorList>
            <person name="Hudson B.P."/>
            <person name="Martinez-Yamout M.A."/>
            <person name="Dyson H.J."/>
            <person name="Wright P.E."/>
        </authorList>
    </citation>
    <scope>STRUCTURE BY NMR OF 151-220 IN COMPLEX WITH RNA</scope>
    <scope>FUNCTION</scope>
    <scope>RNA-BINDING</scope>
</reference>
<proteinExistence type="evidence at protein level"/>
<gene>
    <name evidence="15" type="primary">ZFP36L2</name>
    <name evidence="13" type="synonym">ERF2</name>
    <name type="synonym">RNF162C</name>
    <name evidence="13" type="synonym">TIS11D</name>
</gene>
<organism>
    <name type="scientific">Homo sapiens</name>
    <name type="common">Human</name>
    <dbReference type="NCBI Taxonomy" id="9606"/>
    <lineage>
        <taxon>Eukaryota</taxon>
        <taxon>Metazoa</taxon>
        <taxon>Chordata</taxon>
        <taxon>Craniata</taxon>
        <taxon>Vertebrata</taxon>
        <taxon>Euteleostomi</taxon>
        <taxon>Mammalia</taxon>
        <taxon>Eutheria</taxon>
        <taxon>Euarchontoglires</taxon>
        <taxon>Primates</taxon>
        <taxon>Haplorrhini</taxon>
        <taxon>Catarrhini</taxon>
        <taxon>Hominidae</taxon>
        <taxon>Homo</taxon>
    </lineage>
</organism>
<name>TISD_HUMAN</name>
<accession>P47974</accession>
<accession>Q53TB4</accession>
<accession>Q9BSJ3</accession>
<comment type="function">
    <text evidence="1 5 7 9 11">Zinc-finger RNA-binding protein that destabilizes several cytoplasmic AU-rich element (ARE)-containing mRNA transcripts by promoting their poly(A) tail removal or deadenylation, and hence provide a mechanism for attenuating protein synthesis (PubMed:14981510, PubMed:25106868, PubMed:34611029). Acts as a 3'-untranslated region (UTR) ARE mRNA-binding adapter protein to communicate signaling events to the mRNA decay machinery (PubMed:25106868). Functions by recruiting the CCR4-NOT deadenylase complex and probably other components of the cytoplasmic RNA decay machinery to the bound ARE-containing mRNAs, and hence promotes ARE-mediated mRNA deadenylation and decay processes (PubMed:25106868). Binds to 3'-UTR ARE of numerous mRNAs (PubMed:14981510, PubMed:20506496, PubMed:25106868). Promotes ARE-containing mRNA decay of the low-density lipoprotein (LDL) receptor (LDLR) mRNA in response to phorbol 12-myristate 13-acetate (PMA) treatment in a p38 MAPK-dependent manner (PubMed:25106868). Positively regulates early adipogenesis by promoting ARE-mediated mRNA decay of immediate early genes (IEGs). Plays a role in mature peripheral neuron integrity by promoting ARE-containing mRNA decay of the transcriptional repressor REST mRNA. Plays a role in ovulation and oocyte meiotic maturation by promoting ARE-mediated mRNA decay of the luteinizing hormone receptor LHCGR mRNA. Acts as a negative regulator of erythroid cell differentiation: promotes glucocorticoid-induced self-renewal of erythroid cells by binding mRNAs that are induced or highly expressed during terminal erythroid differentiation and promotes their degradation, preventing erythroid cell differentiation. In association with ZFP36L1 maintains quiescence on developing B lymphocytes by promoting ARE-mediated decay of several mRNAs encoding cell cycle regulators that help B cells progress through the cell cycle, and hence ensuring accurate variable-diversity-joining (VDJ) recombination process and functional immune cell formation. Together with ZFP36L1 is also necessary for thymocyte development and prevention of T-cell acute lymphoblastic leukemia (T-ALL) transformation by promoting ARE-mediated mRNA decay of the oncogenic transcription factor NOTCH1 mRNA.</text>
</comment>
<comment type="subunit">
    <text evidence="9 11">Associates with the cytoplasmic CCR4-NOT deadenylase to trigger ARE-containing mRNA deadenylation and decay processes (PubMed:25106868). Interacts with CNOT7; this interaction is inhibited in response to phorbol 12-myristate 13-acetate (PMA) treatment in a p38 MAPK-dependent manner (PubMed:25106868). Interacts with CNOT6L.</text>
</comment>
<comment type="interaction">
    <interactant intactId="EBI-1644149">
        <id>P47974</id>
    </interactant>
    <interactant intactId="EBI-476295">
        <id>P31947</id>
        <label>SFN</label>
    </interactant>
    <organismsDiffer>false</organismsDiffer>
    <experiments>4</experiments>
</comment>
<comment type="interaction">
    <interactant intactId="EBI-1644149">
        <id>P47974</id>
    </interactant>
    <interactant intactId="EBI-356498">
        <id>P62258</id>
        <label>YWHAE</label>
    </interactant>
    <organismsDiffer>false</organismsDiffer>
    <experiments>5</experiments>
</comment>
<comment type="subcellular location">
    <subcellularLocation>
        <location evidence="11">Nucleus</location>
    </subcellularLocation>
    <subcellularLocation>
        <location evidence="11">Cytoplasm</location>
    </subcellularLocation>
    <text evidence="1">Shuttles between the nucleus and the cytoplasm in a XPO1/CRM1-dependent manner.</text>
</comment>
<comment type="tissue specificity">
    <text evidence="10 11">Expressed mainly in the basal epidermal layer, weakly in the suprabasal epidermal layers (PubMed:27182009). Expressed in epidermal keratinocytes (at protein level) (PubMed:27182009). Expressed in oocytes (PubMed:34611029).</text>
</comment>
<comment type="induction">
    <text evidence="4 6 10">Up-regulated by butyrate in colorectal cancer cells (PubMed:10367403). Up-regulated in keratinocytes after wounding (PubMed:20166898, PubMed:27182009). Up-regulated strongly by granulocyte macrophage colony-stimulating factor (GM-CSF) in keratinocytes (PubMed:20166898). Up-regulated moderately by transforming growth factor (TGF-beta), epidermal growth factor (EGF), tumor necrosis factor (TNF-alpha) and fibroblast growth factor (FGF1) in keratinocytes (PubMed:20166898). Up-regulated also by glucocorticoid dexamethasone in keratinocytes (PubMed:20166898).</text>
</comment>
<comment type="PTM">
    <text evidence="1 9">Phosphorylated by RPS6KA1 at Ser-490 and Ser-492 upon phorbol 12-myristate 13-acetate (PMA) treatment; this phosphorylation results in dissociation of the CCR4-NOT-deadenylase complex and induces p38 MAPK-mediated stabilization of the low-density lipoprotein (LDL) receptor (LDLR) mRNA (PubMed:25106868). Phosphorylation occurs during early preadipocyte differentiation (By similarity).</text>
</comment>
<comment type="disease" evidence="11">
    <disease id="DI-06561">
        <name>Oocyte/zygote/embryo maturation arrest 13</name>
        <acronym>OZEMA13</acronym>
        <description>An autosomal recessive female infertility disorder characterized by embryonic development arrest and embryo implantation failure.</description>
        <dbReference type="MIM" id="620154"/>
    </disease>
    <text>The disease is caused by variants affecting the gene represented in this entry.</text>
</comment>
<comment type="disease">
    <text evidence="8">A frameshift mutation disrupting ZFP36L2 have been found in a patient with acute myeloid leukemia, suggesting that defective ZFP36L2 might be involved in the pathogenesis of certain types of hematological cancers (PubMed:21109922).</text>
</comment>
<keyword id="KW-0002">3D-structure</keyword>
<keyword id="KW-0963">Cytoplasm</keyword>
<keyword id="KW-0217">Developmental protein</keyword>
<keyword id="KW-0225">Disease variant</keyword>
<keyword id="KW-0479">Metal-binding</keyword>
<keyword id="KW-0539">Nucleus</keyword>
<keyword id="KW-0597">Phosphoprotein</keyword>
<keyword id="KW-1267">Proteomics identification</keyword>
<keyword id="KW-1185">Reference proteome</keyword>
<keyword id="KW-0677">Repeat</keyword>
<keyword id="KW-0687">Ribonucleoprotein</keyword>
<keyword id="KW-0694">RNA-binding</keyword>
<keyword id="KW-0862">Zinc</keyword>
<keyword id="KW-0863">Zinc-finger</keyword>
<evidence type="ECO:0000250" key="1">
    <source>
        <dbReference type="UniProtKB" id="P23949"/>
    </source>
</evidence>
<evidence type="ECO:0000255" key="2">
    <source>
        <dbReference type="PROSITE-ProRule" id="PRU00723"/>
    </source>
</evidence>
<evidence type="ECO:0000256" key="3">
    <source>
        <dbReference type="SAM" id="MobiDB-lite"/>
    </source>
</evidence>
<evidence type="ECO:0000269" key="4">
    <source>
    </source>
</evidence>
<evidence type="ECO:0000269" key="5">
    <source>
    </source>
</evidence>
<evidence type="ECO:0000269" key="6">
    <source>
    </source>
</evidence>
<evidence type="ECO:0000269" key="7">
    <source>
    </source>
</evidence>
<evidence type="ECO:0000269" key="8">
    <source>
    </source>
</evidence>
<evidence type="ECO:0000269" key="9">
    <source>
    </source>
</evidence>
<evidence type="ECO:0000269" key="10">
    <source>
    </source>
</evidence>
<evidence type="ECO:0000269" key="11">
    <source>
    </source>
</evidence>
<evidence type="ECO:0000303" key="12">
    <source>
    </source>
</evidence>
<evidence type="ECO:0000303" key="13">
    <source>
    </source>
</evidence>
<evidence type="ECO:0000305" key="14"/>
<evidence type="ECO:0000312" key="15">
    <source>
        <dbReference type="HGNC" id="HGNC:1108"/>
    </source>
</evidence>
<evidence type="ECO:0007744" key="16">
    <source>
    </source>
</evidence>
<evidence type="ECO:0007744" key="17">
    <source>
    </source>
</evidence>
<evidence type="ECO:0007744" key="18">
    <source>
    </source>
</evidence>
<evidence type="ECO:0007829" key="19">
    <source>
        <dbReference type="PDB" id="1RGO"/>
    </source>
</evidence>